<feature type="chain" id="PRO_1000082239" description="Succinate--CoA ligase [ADP-forming] subunit beta">
    <location>
        <begin position="1"/>
        <end position="398"/>
    </location>
</feature>
<feature type="domain" description="ATP-grasp" evidence="1">
    <location>
        <begin position="9"/>
        <end position="250"/>
    </location>
</feature>
<feature type="binding site" evidence="1">
    <location>
        <position position="50"/>
    </location>
    <ligand>
        <name>ATP</name>
        <dbReference type="ChEBI" id="CHEBI:30616"/>
    </ligand>
</feature>
<feature type="binding site" evidence="1">
    <location>
        <begin position="57"/>
        <end position="59"/>
    </location>
    <ligand>
        <name>ATP</name>
        <dbReference type="ChEBI" id="CHEBI:30616"/>
    </ligand>
</feature>
<feature type="binding site" evidence="1">
    <location>
        <position position="104"/>
    </location>
    <ligand>
        <name>ATP</name>
        <dbReference type="ChEBI" id="CHEBI:30616"/>
    </ligand>
</feature>
<feature type="binding site" evidence="1">
    <location>
        <position position="107"/>
    </location>
    <ligand>
        <name>ATP</name>
        <dbReference type="ChEBI" id="CHEBI:30616"/>
    </ligand>
</feature>
<feature type="binding site" evidence="1">
    <location>
        <position position="112"/>
    </location>
    <ligand>
        <name>ATP</name>
        <dbReference type="ChEBI" id="CHEBI:30616"/>
    </ligand>
</feature>
<feature type="binding site" evidence="1">
    <location>
        <position position="205"/>
    </location>
    <ligand>
        <name>Mg(2+)</name>
        <dbReference type="ChEBI" id="CHEBI:18420"/>
    </ligand>
</feature>
<feature type="binding site" evidence="1">
    <location>
        <position position="219"/>
    </location>
    <ligand>
        <name>Mg(2+)</name>
        <dbReference type="ChEBI" id="CHEBI:18420"/>
    </ligand>
</feature>
<feature type="binding site" evidence="1">
    <location>
        <position position="270"/>
    </location>
    <ligand>
        <name>substrate</name>
        <note>ligand shared with subunit alpha</note>
    </ligand>
</feature>
<feature type="binding site" evidence="1">
    <location>
        <begin position="327"/>
        <end position="329"/>
    </location>
    <ligand>
        <name>substrate</name>
        <note>ligand shared with subunit alpha</note>
    </ligand>
</feature>
<organism>
    <name type="scientific">Sorangium cellulosum (strain So ce56)</name>
    <name type="common">Polyangium cellulosum (strain So ce56)</name>
    <dbReference type="NCBI Taxonomy" id="448385"/>
    <lineage>
        <taxon>Bacteria</taxon>
        <taxon>Pseudomonadati</taxon>
        <taxon>Myxococcota</taxon>
        <taxon>Polyangia</taxon>
        <taxon>Polyangiales</taxon>
        <taxon>Polyangiaceae</taxon>
        <taxon>Sorangium</taxon>
    </lineage>
</organism>
<reference key="1">
    <citation type="journal article" date="2007" name="Nat. Biotechnol.">
        <title>Complete genome sequence of the myxobacterium Sorangium cellulosum.</title>
        <authorList>
            <person name="Schneiker S."/>
            <person name="Perlova O."/>
            <person name="Kaiser O."/>
            <person name="Gerth K."/>
            <person name="Alici A."/>
            <person name="Altmeyer M.O."/>
            <person name="Bartels D."/>
            <person name="Bekel T."/>
            <person name="Beyer S."/>
            <person name="Bode E."/>
            <person name="Bode H.B."/>
            <person name="Bolten C.J."/>
            <person name="Choudhuri J.V."/>
            <person name="Doss S."/>
            <person name="Elnakady Y.A."/>
            <person name="Frank B."/>
            <person name="Gaigalat L."/>
            <person name="Goesmann A."/>
            <person name="Groeger C."/>
            <person name="Gross F."/>
            <person name="Jelsbak L."/>
            <person name="Jelsbak L."/>
            <person name="Kalinowski J."/>
            <person name="Kegler C."/>
            <person name="Knauber T."/>
            <person name="Konietzny S."/>
            <person name="Kopp M."/>
            <person name="Krause L."/>
            <person name="Krug D."/>
            <person name="Linke B."/>
            <person name="Mahmud T."/>
            <person name="Martinez-Arias R."/>
            <person name="McHardy A.C."/>
            <person name="Merai M."/>
            <person name="Meyer F."/>
            <person name="Mormann S."/>
            <person name="Munoz-Dorado J."/>
            <person name="Perez J."/>
            <person name="Pradella S."/>
            <person name="Rachid S."/>
            <person name="Raddatz G."/>
            <person name="Rosenau F."/>
            <person name="Rueckert C."/>
            <person name="Sasse F."/>
            <person name="Scharfe M."/>
            <person name="Schuster S.C."/>
            <person name="Suen G."/>
            <person name="Treuner-Lange A."/>
            <person name="Velicer G.J."/>
            <person name="Vorholter F.-J."/>
            <person name="Weissman K.J."/>
            <person name="Welch R.D."/>
            <person name="Wenzel S.C."/>
            <person name="Whitworth D.E."/>
            <person name="Wilhelm S."/>
            <person name="Wittmann C."/>
            <person name="Bloecker H."/>
            <person name="Puehler A."/>
            <person name="Mueller R."/>
        </authorList>
    </citation>
    <scope>NUCLEOTIDE SEQUENCE [LARGE SCALE GENOMIC DNA]</scope>
    <source>
        <strain>So ce56</strain>
    </source>
</reference>
<accession>A9GD65</accession>
<sequence length="398" mass="42290">MKIHEYQGKQLFARYGVPVPKGEPAFQASEVAPIADRLIAQTGNPVVVVKAQIHAGGRGKGGGVKVAKGGSAEATALAEKILGMQLVTKQTGPEGQKVRRLYIEQGLDIARELYFAMLVDRERRRIAVIASTEGGMDIEEVAHSTPEKIYKLFIDPVLGLAPYQGRQLAIALGLTAKETQRQFLKLVASLYACFTAEDCSLLEINPLVVTGAGDVFALDAKVSFDDNAEFRHADWNGMRDVDEEDPVELQAKRAGLSYVSLDGDIGCLVNGAGLAMATMDIILHYGGKPANFLDVGGGASQEQVKTAFQIILRSERVRGIFVNIFGGIMRCDVVAAGVIAAAKELGLKVPLVVRLEGTNVEAGRKLLDESGLTIQSASSMADGAQKIVAATRGGKAGA</sequence>
<gene>
    <name evidence="1" type="primary">sucC</name>
    <name type="ordered locus">sce9142</name>
</gene>
<name>SUCC_SORC5</name>
<comment type="function">
    <text evidence="1">Succinyl-CoA synthetase functions in the citric acid cycle (TCA), coupling the hydrolysis of succinyl-CoA to the synthesis of either ATP or GTP and thus represents the only step of substrate-level phosphorylation in the TCA. The beta subunit provides nucleotide specificity of the enzyme and binds the substrate succinate, while the binding sites for coenzyme A and phosphate are found in the alpha subunit.</text>
</comment>
<comment type="catalytic activity">
    <reaction evidence="1">
        <text>succinate + ATP + CoA = succinyl-CoA + ADP + phosphate</text>
        <dbReference type="Rhea" id="RHEA:17661"/>
        <dbReference type="ChEBI" id="CHEBI:30031"/>
        <dbReference type="ChEBI" id="CHEBI:30616"/>
        <dbReference type="ChEBI" id="CHEBI:43474"/>
        <dbReference type="ChEBI" id="CHEBI:57287"/>
        <dbReference type="ChEBI" id="CHEBI:57292"/>
        <dbReference type="ChEBI" id="CHEBI:456216"/>
        <dbReference type="EC" id="6.2.1.5"/>
    </reaction>
    <physiologicalReaction direction="right-to-left" evidence="1">
        <dbReference type="Rhea" id="RHEA:17663"/>
    </physiologicalReaction>
</comment>
<comment type="catalytic activity">
    <reaction evidence="1">
        <text>GTP + succinate + CoA = succinyl-CoA + GDP + phosphate</text>
        <dbReference type="Rhea" id="RHEA:22120"/>
        <dbReference type="ChEBI" id="CHEBI:30031"/>
        <dbReference type="ChEBI" id="CHEBI:37565"/>
        <dbReference type="ChEBI" id="CHEBI:43474"/>
        <dbReference type="ChEBI" id="CHEBI:57287"/>
        <dbReference type="ChEBI" id="CHEBI:57292"/>
        <dbReference type="ChEBI" id="CHEBI:58189"/>
    </reaction>
    <physiologicalReaction direction="right-to-left" evidence="1">
        <dbReference type="Rhea" id="RHEA:22122"/>
    </physiologicalReaction>
</comment>
<comment type="cofactor">
    <cofactor evidence="1">
        <name>Mg(2+)</name>
        <dbReference type="ChEBI" id="CHEBI:18420"/>
    </cofactor>
    <text evidence="1">Binds 1 Mg(2+) ion per subunit.</text>
</comment>
<comment type="pathway">
    <text evidence="1">Carbohydrate metabolism; tricarboxylic acid cycle; succinate from succinyl-CoA (ligase route): step 1/1.</text>
</comment>
<comment type="subunit">
    <text evidence="1">Heterotetramer of two alpha and two beta subunits.</text>
</comment>
<comment type="similarity">
    <text evidence="1">Belongs to the succinate/malate CoA ligase beta subunit family.</text>
</comment>
<proteinExistence type="inferred from homology"/>
<keyword id="KW-0067">ATP-binding</keyword>
<keyword id="KW-0436">Ligase</keyword>
<keyword id="KW-0460">Magnesium</keyword>
<keyword id="KW-0479">Metal-binding</keyword>
<keyword id="KW-0547">Nucleotide-binding</keyword>
<keyword id="KW-1185">Reference proteome</keyword>
<keyword id="KW-0816">Tricarboxylic acid cycle</keyword>
<dbReference type="EC" id="6.2.1.5" evidence="1"/>
<dbReference type="EMBL" id="AM746676">
    <property type="protein sequence ID" value="CAN99315.1"/>
    <property type="molecule type" value="Genomic_DNA"/>
</dbReference>
<dbReference type="RefSeq" id="WP_012241751.1">
    <property type="nucleotide sequence ID" value="NC_010162.1"/>
</dbReference>
<dbReference type="SMR" id="A9GD65"/>
<dbReference type="STRING" id="448385.sce9142"/>
<dbReference type="KEGG" id="scl:sce9142"/>
<dbReference type="eggNOG" id="COG0045">
    <property type="taxonomic scope" value="Bacteria"/>
</dbReference>
<dbReference type="HOGENOM" id="CLU_037430_0_0_7"/>
<dbReference type="OrthoDB" id="9802602at2"/>
<dbReference type="BioCyc" id="SCEL448385:SCE_RS46795-MONOMER"/>
<dbReference type="UniPathway" id="UPA00223">
    <property type="reaction ID" value="UER00999"/>
</dbReference>
<dbReference type="Proteomes" id="UP000002139">
    <property type="component" value="Chromosome"/>
</dbReference>
<dbReference type="GO" id="GO:0005829">
    <property type="term" value="C:cytosol"/>
    <property type="evidence" value="ECO:0007669"/>
    <property type="project" value="TreeGrafter"/>
</dbReference>
<dbReference type="GO" id="GO:0042709">
    <property type="term" value="C:succinate-CoA ligase complex"/>
    <property type="evidence" value="ECO:0007669"/>
    <property type="project" value="TreeGrafter"/>
</dbReference>
<dbReference type="GO" id="GO:0005524">
    <property type="term" value="F:ATP binding"/>
    <property type="evidence" value="ECO:0007669"/>
    <property type="project" value="UniProtKB-UniRule"/>
</dbReference>
<dbReference type="GO" id="GO:0000287">
    <property type="term" value="F:magnesium ion binding"/>
    <property type="evidence" value="ECO:0007669"/>
    <property type="project" value="UniProtKB-UniRule"/>
</dbReference>
<dbReference type="GO" id="GO:0004775">
    <property type="term" value="F:succinate-CoA ligase (ADP-forming) activity"/>
    <property type="evidence" value="ECO:0007669"/>
    <property type="project" value="UniProtKB-UniRule"/>
</dbReference>
<dbReference type="GO" id="GO:0004776">
    <property type="term" value="F:succinate-CoA ligase (GDP-forming) activity"/>
    <property type="evidence" value="ECO:0007669"/>
    <property type="project" value="RHEA"/>
</dbReference>
<dbReference type="GO" id="GO:0006104">
    <property type="term" value="P:succinyl-CoA metabolic process"/>
    <property type="evidence" value="ECO:0007669"/>
    <property type="project" value="TreeGrafter"/>
</dbReference>
<dbReference type="GO" id="GO:0006099">
    <property type="term" value="P:tricarboxylic acid cycle"/>
    <property type="evidence" value="ECO:0007669"/>
    <property type="project" value="UniProtKB-UniRule"/>
</dbReference>
<dbReference type="FunFam" id="3.30.1490.20:FF:000002">
    <property type="entry name" value="Succinate--CoA ligase [ADP-forming] subunit beta"/>
    <property type="match status" value="1"/>
</dbReference>
<dbReference type="FunFam" id="3.30.470.20:FF:000002">
    <property type="entry name" value="Succinate--CoA ligase [ADP-forming] subunit beta"/>
    <property type="match status" value="1"/>
</dbReference>
<dbReference type="FunFam" id="3.40.50.261:FF:000001">
    <property type="entry name" value="Succinate--CoA ligase [ADP-forming] subunit beta"/>
    <property type="match status" value="1"/>
</dbReference>
<dbReference type="Gene3D" id="3.30.1490.20">
    <property type="entry name" value="ATP-grasp fold, A domain"/>
    <property type="match status" value="1"/>
</dbReference>
<dbReference type="Gene3D" id="3.30.470.20">
    <property type="entry name" value="ATP-grasp fold, B domain"/>
    <property type="match status" value="1"/>
</dbReference>
<dbReference type="Gene3D" id="3.40.50.261">
    <property type="entry name" value="Succinyl-CoA synthetase domains"/>
    <property type="match status" value="1"/>
</dbReference>
<dbReference type="HAMAP" id="MF_00558">
    <property type="entry name" value="Succ_CoA_beta"/>
    <property type="match status" value="1"/>
</dbReference>
<dbReference type="InterPro" id="IPR011761">
    <property type="entry name" value="ATP-grasp"/>
</dbReference>
<dbReference type="InterPro" id="IPR013650">
    <property type="entry name" value="ATP-grasp_succ-CoA_synth-type"/>
</dbReference>
<dbReference type="InterPro" id="IPR013815">
    <property type="entry name" value="ATP_grasp_subdomain_1"/>
</dbReference>
<dbReference type="InterPro" id="IPR017866">
    <property type="entry name" value="Succ-CoA_synthase_bsu_CS"/>
</dbReference>
<dbReference type="InterPro" id="IPR005811">
    <property type="entry name" value="SUCC_ACL_C"/>
</dbReference>
<dbReference type="InterPro" id="IPR005809">
    <property type="entry name" value="Succ_CoA_ligase-like_bsu"/>
</dbReference>
<dbReference type="InterPro" id="IPR016102">
    <property type="entry name" value="Succinyl-CoA_synth-like"/>
</dbReference>
<dbReference type="NCBIfam" id="NF001913">
    <property type="entry name" value="PRK00696.1"/>
    <property type="match status" value="1"/>
</dbReference>
<dbReference type="NCBIfam" id="TIGR01016">
    <property type="entry name" value="sucCoAbeta"/>
    <property type="match status" value="1"/>
</dbReference>
<dbReference type="PANTHER" id="PTHR11815:SF10">
    <property type="entry name" value="SUCCINATE--COA LIGASE [GDP-FORMING] SUBUNIT BETA, MITOCHONDRIAL"/>
    <property type="match status" value="1"/>
</dbReference>
<dbReference type="PANTHER" id="PTHR11815">
    <property type="entry name" value="SUCCINYL-COA SYNTHETASE BETA CHAIN"/>
    <property type="match status" value="1"/>
</dbReference>
<dbReference type="Pfam" id="PF08442">
    <property type="entry name" value="ATP-grasp_2"/>
    <property type="match status" value="1"/>
</dbReference>
<dbReference type="Pfam" id="PF00549">
    <property type="entry name" value="Ligase_CoA"/>
    <property type="match status" value="1"/>
</dbReference>
<dbReference type="PIRSF" id="PIRSF001554">
    <property type="entry name" value="SucCS_beta"/>
    <property type="match status" value="1"/>
</dbReference>
<dbReference type="SUPFAM" id="SSF56059">
    <property type="entry name" value="Glutathione synthetase ATP-binding domain-like"/>
    <property type="match status" value="1"/>
</dbReference>
<dbReference type="SUPFAM" id="SSF52210">
    <property type="entry name" value="Succinyl-CoA synthetase domains"/>
    <property type="match status" value="1"/>
</dbReference>
<dbReference type="PROSITE" id="PS50975">
    <property type="entry name" value="ATP_GRASP"/>
    <property type="match status" value="1"/>
</dbReference>
<dbReference type="PROSITE" id="PS01217">
    <property type="entry name" value="SUCCINYL_COA_LIG_3"/>
    <property type="match status" value="1"/>
</dbReference>
<protein>
    <recommendedName>
        <fullName evidence="1">Succinate--CoA ligase [ADP-forming] subunit beta</fullName>
        <ecNumber evidence="1">6.2.1.5</ecNumber>
    </recommendedName>
    <alternativeName>
        <fullName evidence="1">Succinyl-CoA synthetase subunit beta</fullName>
        <shortName evidence="1">SCS-beta</shortName>
    </alternativeName>
</protein>
<evidence type="ECO:0000255" key="1">
    <source>
        <dbReference type="HAMAP-Rule" id="MF_00558"/>
    </source>
</evidence>